<proteinExistence type="evidence at protein level"/>
<protein>
    <recommendedName>
        <fullName evidence="15">Formate channel FocA</fullName>
    </recommendedName>
    <alternativeName>
        <fullName evidence="15">Formate transporter FocA</fullName>
    </alternativeName>
</protein>
<name>FOCA_ECOLI</name>
<evidence type="ECO:0000250" key="1">
    <source>
        <dbReference type="UniProtKB" id="P0AC25"/>
    </source>
</evidence>
<evidence type="ECO:0000269" key="2">
    <source>
    </source>
</evidence>
<evidence type="ECO:0000269" key="3">
    <source>
    </source>
</evidence>
<evidence type="ECO:0000269" key="4">
    <source>
    </source>
</evidence>
<evidence type="ECO:0000269" key="5">
    <source>
    </source>
</evidence>
<evidence type="ECO:0000269" key="6">
    <source>
    </source>
</evidence>
<evidence type="ECO:0000269" key="7">
    <source>
    </source>
</evidence>
<evidence type="ECO:0000269" key="8">
    <source>
    </source>
</evidence>
<evidence type="ECO:0000269" key="9">
    <source>
    </source>
</evidence>
<evidence type="ECO:0000269" key="10">
    <source>
    </source>
</evidence>
<evidence type="ECO:0000269" key="11">
    <source>
    </source>
</evidence>
<evidence type="ECO:0000269" key="12">
    <source>
    </source>
</evidence>
<evidence type="ECO:0000269" key="13">
    <source>
    </source>
</evidence>
<evidence type="ECO:0000269" key="14">
    <source>
    </source>
</evidence>
<evidence type="ECO:0000303" key="15">
    <source>
    </source>
</evidence>
<evidence type="ECO:0000303" key="16">
    <source>
    </source>
</evidence>
<evidence type="ECO:0000305" key="17"/>
<evidence type="ECO:0000305" key="18">
    <source>
    </source>
</evidence>
<evidence type="ECO:0000305" key="19">
    <source>
    </source>
</evidence>
<evidence type="ECO:0000305" key="20">
    <source>
    </source>
</evidence>
<feature type="chain" id="PRO_0000094717" description="Formate channel FocA">
    <location>
        <begin position="1"/>
        <end position="285"/>
    </location>
</feature>
<feature type="topological domain" description="Cytoplasmic" evidence="1">
    <location>
        <begin position="1"/>
        <end position="30"/>
    </location>
</feature>
<feature type="transmembrane region" description="Helical" evidence="1">
    <location>
        <begin position="31"/>
        <end position="56"/>
    </location>
</feature>
<feature type="topological domain" description="Periplasmic" evidence="1">
    <location>
        <begin position="57"/>
        <end position="64"/>
    </location>
</feature>
<feature type="transmembrane region" description="Helical" evidence="1">
    <location>
        <begin position="65"/>
        <end position="85"/>
    </location>
</feature>
<feature type="topological domain" description="Cytoplasmic" evidence="1">
    <location>
        <begin position="86"/>
        <end position="112"/>
    </location>
</feature>
<feature type="transmembrane region" description="Helical" evidence="1">
    <location>
        <begin position="113"/>
        <end position="135"/>
    </location>
</feature>
<feature type="topological domain" description="Periplasmic" evidence="1">
    <location>
        <begin position="136"/>
        <end position="160"/>
    </location>
</feature>
<feature type="transmembrane region" description="Helical" evidence="1">
    <location>
        <begin position="161"/>
        <end position="181"/>
    </location>
</feature>
<feature type="topological domain" description="Cytoplasmic" evidence="1">
    <location>
        <begin position="182"/>
        <end position="187"/>
    </location>
</feature>
<feature type="transmembrane region" description="Helical" evidence="1">
    <location>
        <begin position="188"/>
        <end position="205"/>
    </location>
</feature>
<feature type="topological domain" description="Periplasmic" evidence="1">
    <location>
        <begin position="206"/>
        <end position="249"/>
    </location>
</feature>
<feature type="transmembrane region" description="Helical" evidence="1">
    <location>
        <begin position="250"/>
        <end position="276"/>
    </location>
</feature>
<feature type="topological domain" description="Cytoplasmic" evidence="1">
    <location>
        <begin position="277"/>
        <end position="285"/>
    </location>
</feature>
<feature type="site" description="Important for formate translocation" evidence="19">
    <location>
        <position position="91"/>
    </location>
</feature>
<feature type="site" description="Important for formate translocation" evidence="19">
    <location>
        <position position="209"/>
    </location>
</feature>
<feature type="mutagenesis site" description="Impairs formate efflux and hypophosphite uptake into the cell. Mutant is synthesized in lower amounts compared with the full-length protein, but it forms membrane-integral homopentamers." evidence="10">
    <location>
        <begin position="2"/>
        <end position="31"/>
    </location>
</feature>
<feature type="mutagenesis site" description="Exhibits reduced levels in the membrane and is inactive in bidirectional formate permeation." evidence="10">
    <original>KADNPFDLLL</original>
    <variation>AAAAAAAAAA</variation>
    <location>
        <begin position="2"/>
        <end position="11"/>
    </location>
</feature>
<feature type="mutagenesis site" description="Does not affect intracellular formate levels." evidence="6">
    <original>K</original>
    <variation>A</variation>
    <location>
        <position position="26"/>
    </location>
</feature>
<feature type="mutagenesis site" description="Decreases intracellular formate levels." evidence="6">
    <original>L</original>
    <variation>A</variation>
    <location>
        <position position="79"/>
    </location>
</feature>
<feature type="mutagenesis site" description="Does not affect intracellular formate levels." evidence="6">
    <original>L</original>
    <variation>A</variation>
    <location>
        <position position="89"/>
    </location>
</feature>
<feature type="mutagenesis site" description="Does not affect intracellular formate levels. Causes disassembly into lower oligomeric forms." evidence="6">
    <original>F</original>
    <variation>Y</variation>
    <location>
        <position position="90"/>
    </location>
</feature>
<feature type="mutagenesis site" description="Increases intracellular formate levels. Cannot export formate, but may import formate poorly in a pH-dependent manner. Causes disassembly into lower oligomeric forms. Reduces intracellular formate levels; when associated with Y-209." evidence="6 12 13">
    <original>T</original>
    <variation>A</variation>
    <location>
        <position position="91"/>
    </location>
</feature>
<feature type="mutagenesis site" description="Loss of formate efflux." evidence="13">
    <original>T</original>
    <variation>C</variation>
    <variation>D</variation>
    <variation>H</variation>
    <variation>K</variation>
    <variation>N</variation>
    <location>
        <position position="91"/>
    </location>
</feature>
<feature type="mutagenesis site" description="Allows maintenance of efflux function. Does not affect intracellular formate levels. Causes disassembly into lower oligomeric forms. Exhibits partial sensitivity to the toxic formate analog hypophosphite." evidence="6 13">
    <original>T</original>
    <variation>S</variation>
    <location>
        <position position="91"/>
    </location>
</feature>
<feature type="mutagenesis site" description="Exhibits partial sensitivity to the toxic formate analog hypophosphite." evidence="13">
    <original>T</original>
    <variation>Y</variation>
    <location>
        <position position="91"/>
    </location>
</feature>
<feature type="mutagenesis site" description="Does not affect intracellular formate levels. Causes disassembly into lower oligomeric forms." evidence="6">
    <original>A</original>
    <variation>I</variation>
    <location>
        <position position="99"/>
    </location>
</feature>
<feature type="mutagenesis site" description="Does not affect intracellular formate levels." evidence="6">
    <original>K</original>
    <variation>A</variation>
    <location>
        <position position="100"/>
    </location>
</feature>
<feature type="mutagenesis site" description="Does not affect intracellular formate levels." evidence="6">
    <original>G</original>
    <variation>A</variation>
    <location>
        <position position="103"/>
    </location>
</feature>
<feature type="mutagenesis site" description="Does not affect intracellular formate levels. Causes disassembly into lower oligomeric forms." evidence="6">
    <original>W</original>
    <variation>L</variation>
    <location>
        <position position="107"/>
    </location>
</feature>
<feature type="mutagenesis site" description="Slightly increases intracellular formate levels. Could be unable either to export or to import formate." evidence="6">
    <original>K</original>
    <variation>E</variation>
    <location>
        <position position="156"/>
    </location>
</feature>
<feature type="mutagenesis site" description="Decreases intracellular formate levels." evidence="6">
    <original>F</original>
    <variation>A</variation>
    <location>
        <position position="202"/>
    </location>
</feature>
<feature type="mutagenesis site" description="Decreases intracellular formate levels." evidence="6">
    <original>E</original>
    <variation>A</variation>
    <location>
        <position position="208"/>
    </location>
</feature>
<feature type="mutagenesis site" description="Converts FocA into a formate-efflux channel. Shows either no, or a minimal, formate uptake. Uptake of the toxic formate analog hypophosphite is strongly impaired." evidence="13">
    <original>H</original>
    <variation>A</variation>
    <variation>I</variation>
    <location>
        <position position="209"/>
    </location>
</feature>
<feature type="mutagenesis site" description="Shows inactive, or poorly functional formate efflux. Retains capability for exogenous formate uptake. Uptake of the toxic formate analog hypophosphite is strongly impaired." evidence="13">
    <original>H</original>
    <variation>D</variation>
    <variation>F</variation>
    <variation>K</variation>
    <variation>W</variation>
    <location>
        <position position="209"/>
    </location>
</feature>
<feature type="mutagenesis site" description="Converts FocA into an exclusive formate-efflux channel. The bacteria can neither accumulate formate nor produce hydrogen gas. Uptake of the toxic formate analog hypophosphite is strongly impaired and fails to result in toxicity to the cells." evidence="11 13">
    <original>H</original>
    <variation>N</variation>
    <location>
        <position position="209"/>
    </location>
</feature>
<feature type="mutagenesis site" description="Converts FocA into an exclusive formate-efflux channel. The bacteria can neither accumulate formate nor produce hydrogen gas." evidence="11">
    <original>H</original>
    <variation>Q</variation>
    <location>
        <position position="209"/>
    </location>
</feature>
<feature type="mutagenesis site" description="Converts FocA into a formate-efflux channel. Shows weak formate uptake. Uptake of the toxic formate analog hypophosphite is strongly impaired." evidence="13">
    <original>H</original>
    <variation>T</variation>
    <location>
        <position position="209"/>
    </location>
</feature>
<feature type="mutagenesis site" description="Increases intracellular formate levels. Reduces intracellular formate levels; when associated with A-91." evidence="6">
    <original>H</original>
    <variation>Y</variation>
    <location>
        <position position="209"/>
    </location>
</feature>
<feature type="mutagenesis site" description="Increases intracellular formate levels." evidence="6">
    <original>N</original>
    <variation>D</variation>
    <location>
        <position position="213"/>
    </location>
</feature>
<reference key="1">
    <citation type="journal article" date="1989" name="J. Bacteriol.">
        <title>Novel transcriptional control of the pyruvate formate-lyase gene: upstream regulatory sequences and multiple promoters regulate anaerobic expression.</title>
        <authorList>
            <person name="Sawers G."/>
            <person name="Boeck A."/>
        </authorList>
    </citation>
    <scope>NUCLEOTIDE SEQUENCE [GENOMIC DNA]</scope>
</reference>
<reference key="2">
    <citation type="journal article" date="1996" name="DNA Res.">
        <title>A 718-kb DNA sequence of the Escherichia coli K-12 genome corresponding to the 12.7-28.0 min region on the linkage map.</title>
        <authorList>
            <person name="Oshima T."/>
            <person name="Aiba H."/>
            <person name="Baba T."/>
            <person name="Fujita K."/>
            <person name="Hayashi K."/>
            <person name="Honjo A."/>
            <person name="Ikemoto K."/>
            <person name="Inada T."/>
            <person name="Itoh T."/>
            <person name="Kajihara M."/>
            <person name="Kanai K."/>
            <person name="Kashimoto K."/>
            <person name="Kimura S."/>
            <person name="Kitagawa M."/>
            <person name="Makino K."/>
            <person name="Masuda S."/>
            <person name="Miki T."/>
            <person name="Mizobuchi K."/>
            <person name="Mori H."/>
            <person name="Motomura K."/>
            <person name="Nakamura Y."/>
            <person name="Nashimoto H."/>
            <person name="Nishio Y."/>
            <person name="Saito N."/>
            <person name="Sampei G."/>
            <person name="Seki Y."/>
            <person name="Tagami H."/>
            <person name="Takemoto K."/>
            <person name="Wada C."/>
            <person name="Yamamoto Y."/>
            <person name="Yano M."/>
            <person name="Horiuchi T."/>
        </authorList>
    </citation>
    <scope>NUCLEOTIDE SEQUENCE [LARGE SCALE GENOMIC DNA]</scope>
    <source>
        <strain>K12 / W3110 / ATCC 27325 / DSM 5911</strain>
    </source>
</reference>
<reference key="3">
    <citation type="journal article" date="1997" name="Science">
        <title>The complete genome sequence of Escherichia coli K-12.</title>
        <authorList>
            <person name="Blattner F.R."/>
            <person name="Plunkett G. III"/>
            <person name="Bloch C.A."/>
            <person name="Perna N.T."/>
            <person name="Burland V."/>
            <person name="Riley M."/>
            <person name="Collado-Vides J."/>
            <person name="Glasner J.D."/>
            <person name="Rode C.K."/>
            <person name="Mayhew G.F."/>
            <person name="Gregor J."/>
            <person name="Davis N.W."/>
            <person name="Kirkpatrick H.A."/>
            <person name="Goeden M.A."/>
            <person name="Rose D.J."/>
            <person name="Mau B."/>
            <person name="Shao Y."/>
        </authorList>
    </citation>
    <scope>NUCLEOTIDE SEQUENCE [LARGE SCALE GENOMIC DNA]</scope>
    <source>
        <strain>K12 / MG1655 / ATCC 47076</strain>
    </source>
</reference>
<reference key="4">
    <citation type="journal article" date="2006" name="Mol. Syst. Biol.">
        <title>Highly accurate genome sequences of Escherichia coli K-12 strains MG1655 and W3110.</title>
        <authorList>
            <person name="Hayashi K."/>
            <person name="Morooka N."/>
            <person name="Yamamoto Y."/>
            <person name="Fujita K."/>
            <person name="Isono K."/>
            <person name="Choi S."/>
            <person name="Ohtsubo E."/>
            <person name="Baba T."/>
            <person name="Wanner B.L."/>
            <person name="Mori H."/>
            <person name="Horiuchi T."/>
        </authorList>
    </citation>
    <scope>NUCLEOTIDE SEQUENCE [LARGE SCALE GENOMIC DNA]</scope>
    <source>
        <strain>K12 / W3110 / ATCC 27325 / DSM 5911</strain>
    </source>
</reference>
<reference key="5">
    <citation type="journal article" date="1994" name="Mol. Microbiol.">
        <title>Isolation and characterization of hypophosphite-resistant mutants of Escherichia coli: identification of the FocA protein, encoded by the pfl operon, as a putative formate transporter.</title>
        <authorList>
            <person name="Suppmann B."/>
            <person name="Sawers G."/>
        </authorList>
    </citation>
    <scope>FUNCTION</scope>
</reference>
<reference key="6">
    <citation type="journal article" date="2005" name="Science">
        <title>Global topology analysis of the Escherichia coli inner membrane proteome.</title>
        <authorList>
            <person name="Daley D.O."/>
            <person name="Rapp M."/>
            <person name="Granseth E."/>
            <person name="Melen K."/>
            <person name="Drew D."/>
            <person name="von Heijne G."/>
        </authorList>
    </citation>
    <scope>SUBCELLULAR LOCATION</scope>
    <source>
        <strain>K12 / MG1655 / ATCC 47076</strain>
    </source>
</reference>
<reference key="7">
    <citation type="journal article" date="2006" name="Microbiology">
        <title>Differential turnover of the multiple processed transcripts of the Escherichia coli focA-pflB operon.</title>
        <authorList>
            <person name="Sawers R.G."/>
        </authorList>
    </citation>
    <scope>INDUCTION</scope>
    <scope>TRANSCRIPTIONAL REGULATION</scope>
</reference>
<reference key="8">
    <citation type="journal article" date="2010" name="FEMS Microbiol. Lett.">
        <title>Unexpected oligomeric structure of the FocA formate channel of Escherichia coli: a paradigm for the formate-nitrite transporter family of integral membrane proteins.</title>
        <authorList>
            <person name="Falke D."/>
            <person name="Schulz K."/>
            <person name="Doberenz C."/>
            <person name="Beyer L."/>
            <person name="Lilie H."/>
            <person name="Thiemer B."/>
            <person name="Sawers R.G."/>
        </authorList>
    </citation>
    <scope>SUBUNIT</scope>
    <scope>SUBCELLULAR LOCATION</scope>
    <source>
        <strain>K12 / MC4100 / ATCC 35695 / DSM 6574</strain>
    </source>
</reference>
<reference key="9">
    <citation type="journal article" date="2013" name="J. Bacteriol.">
        <title>Coordination of FocA and pyruvate formate-lyase synthesis in Escherichia coli demonstrates preferential translocation of formate over other mixed-acid fermentation products.</title>
        <authorList>
            <person name="Beyer L."/>
            <person name="Doberenz C."/>
            <person name="Falke D."/>
            <person name="Hunger D."/>
            <person name="Suppmann B."/>
            <person name="Sawers R.G."/>
        </authorList>
    </citation>
    <scope>FUNCTION</scope>
    <scope>TRANSCRIPTIONAL REGULATION</scope>
    <scope>OVEREXPRESSION</scope>
    <source>
        <strain>K12 / MC4100 / ATCC 35695 / DSM 6574</strain>
    </source>
</reference>
<reference key="10">
    <citation type="journal article" date="2014" name="Biol. Chem.">
        <title>Identification of key residues in the formate channel FocA that control import and export of formate.</title>
        <authorList>
            <person name="Hunger D."/>
            <person name="Doberenz C."/>
            <person name="Sawers R.G."/>
        </authorList>
    </citation>
    <scope>FUNCTION</scope>
    <scope>CATALYTIC ACTIVITY</scope>
    <scope>SUBUNIT</scope>
    <scope>SUBCELLULAR LOCATION</scope>
    <scope>MUTAGENESIS OF LYS-26; LEU-79; LEU-89; PHE-90; THR-91; ALA-99; LYS-100; GLY-103; TRP-107; LYS-156; PHE-202; GLU-208; HIS-209 AND ASN-213</scope>
</reference>
<reference key="11">
    <citation type="journal article" date="2014" name="J. Mol. Biol.">
        <title>Pyruvate formate-lyase interacts directly with the formate channel FocA to regulate formate translocation.</title>
        <authorList>
            <person name="Doberenz C."/>
            <person name="Zorn M."/>
            <person name="Falke D."/>
            <person name="Nannemann D."/>
            <person name="Hunger D."/>
            <person name="Beyer L."/>
            <person name="Ihling C.H."/>
            <person name="Meiler J."/>
            <person name="Sinz A."/>
            <person name="Sawers R.G."/>
        </authorList>
    </citation>
    <scope>ACTIVITY REGULATION</scope>
    <scope>INTERACTION WITH PFLB</scope>
</reference>
<reference key="12">
    <citation type="journal article" date="2016" name="Biochem. Biophys. Rep.">
        <title>The glycyl-radical enzyme 2-ketobutyrate formate-lyase, TdcE, interacts specifically with the formate-translocating FNT-channel protein FocA.</title>
        <authorList>
            <person name="Falke D."/>
            <person name="Doberenz C."/>
            <person name="Hunger D."/>
            <person name="Sawers R.G."/>
        </authorList>
    </citation>
    <scope>INTERACTION WITH TDCE</scope>
    <source>
        <strain>K12 / MC4100 / ATCC 35695 / DSM 6574</strain>
    </source>
</reference>
<reference key="13">
    <citation type="journal article" date="2018" name="FEMS Microbiol. Lett.">
        <title>pH and a mixed carbon-substrate spectrum influence FocA- and FocB-dependent, formate-driven H2 production in Escherichia coli.</title>
        <authorList>
            <person name="Hakobyan B."/>
            <person name="Pinske C."/>
            <person name="Sawers G."/>
            <person name="Trchounian A."/>
            <person name="Trchounian K."/>
        </authorList>
    </citation>
    <scope>FUNCTION</scope>
    <scope>CATALYTIC ACTIVITY</scope>
    <scope>ACTIVITY REGULATION</scope>
    <scope>DISRUPTION PHENOTYPE</scope>
    <source>
        <strain>K12</strain>
    </source>
</reference>
<reference key="14">
    <citation type="journal article" date="2021" name="Mol. Microbiol.">
        <title>The soluble cytoplasmic N-terminal domain of the FocA channel gates bidirectional formate translocation.</title>
        <authorList>
            <person name="Kammel M."/>
            <person name="Hunger D."/>
            <person name="Sawers R.G."/>
        </authorList>
    </citation>
    <scope>FUNCTION</scope>
    <scope>ACTIVITY REGULATION</scope>
    <scope>SUBUNIT</scope>
    <scope>SUBCELLULAR LOCATION</scope>
    <scope>DOMAIN</scope>
    <scope>MUTAGENESIS OF 2-LYS--LEU-11 AND 2-LYS--PRO-31</scope>
    <source>
        <strain>K12 / MC4100 / ATCC 35695 / DSM 6574</strain>
    </source>
</reference>
<reference key="15">
    <citation type="journal article" date="2022" name="Microbiology">
        <title>A single amino acid exchange converts FocA into a unidirectional efflux channel for formate.</title>
        <authorList>
            <person name="Kammel M."/>
            <person name="Trebbin O."/>
            <person name="Pinske C."/>
            <person name="Sawers R.G."/>
        </authorList>
    </citation>
    <scope>FUNCTION</scope>
    <scope>CATALYTIC ACTIVITY</scope>
    <scope>DOMAIN</scope>
    <scope>MUTAGENESIS OF HIS-209</scope>
</reference>
<reference key="16">
    <citation type="journal article" date="2022" name="Microbiology">
        <title>The FocA channel functions to maintain intracellular formate homeostasis during Escherichia coli fermentation.</title>
        <authorList>
            <person name="Kammel M."/>
            <person name="Sawers R.G."/>
        </authorList>
    </citation>
    <scope>FUNCTION</scope>
    <scope>DOMAIN</scope>
    <scope>MUTAGENESIS OF THR-91</scope>
</reference>
<reference key="17">
    <citation type="journal article" date="2022" name="Microb. Physiol.">
        <title>Interplay between the conserved pore residues Thr-91 and His-209 controls formate translocation through the FocA channel.</title>
        <authorList>
            <person name="Kammel M."/>
            <person name="Trebbin O."/>
            <person name="Sawers R.G."/>
        </authorList>
    </citation>
    <scope>FUNCTION</scope>
    <scope>ACTIVITY REGULATION</scope>
    <scope>DOMAIN</scope>
    <scope>MUTAGENESIS OF THR-91 AND HIS-209</scope>
</reference>
<dbReference type="EMBL" id="AP009048">
    <property type="protein sequence ID" value="BAA35639.1"/>
    <property type="molecule type" value="Genomic_DNA"/>
</dbReference>
<dbReference type="EMBL" id="M26413">
    <property type="protein sequence ID" value="AAA20390.1"/>
    <property type="status" value="ALT_INIT"/>
    <property type="molecule type" value="Genomic_DNA"/>
</dbReference>
<dbReference type="EMBL" id="U00096">
    <property type="protein sequence ID" value="AAC73990.1"/>
    <property type="molecule type" value="Genomic_DNA"/>
</dbReference>
<dbReference type="PIR" id="A32305">
    <property type="entry name" value="A32305"/>
</dbReference>
<dbReference type="RefSeq" id="NP_415424.1">
    <property type="nucleotide sequence ID" value="NC_000913.3"/>
</dbReference>
<dbReference type="RefSeq" id="WP_000642546.1">
    <property type="nucleotide sequence ID" value="NZ_SSZK01000002.1"/>
</dbReference>
<dbReference type="SMR" id="P0AC23"/>
<dbReference type="BioGRID" id="4260836">
    <property type="interactions" value="8"/>
</dbReference>
<dbReference type="DIP" id="DIP-9670N"/>
<dbReference type="FunCoup" id="P0AC23">
    <property type="interactions" value="154"/>
</dbReference>
<dbReference type="IntAct" id="P0AC23">
    <property type="interactions" value="1"/>
</dbReference>
<dbReference type="STRING" id="511145.b0904"/>
<dbReference type="TCDB" id="1.A.16.1.1">
    <property type="family name" value="the formate-nitrite transporter (fnt) family"/>
</dbReference>
<dbReference type="jPOST" id="P0AC23"/>
<dbReference type="PaxDb" id="511145-b0904"/>
<dbReference type="EnsemblBacteria" id="AAC73990">
    <property type="protein sequence ID" value="AAC73990"/>
    <property type="gene ID" value="b0904"/>
</dbReference>
<dbReference type="GeneID" id="93776514"/>
<dbReference type="GeneID" id="945513"/>
<dbReference type="KEGG" id="ecj:JW0887"/>
<dbReference type="KEGG" id="eco:b0904"/>
<dbReference type="KEGG" id="ecoc:C3026_05580"/>
<dbReference type="PATRIC" id="fig|1411691.4.peg.1372"/>
<dbReference type="EchoBASE" id="EB1238"/>
<dbReference type="eggNOG" id="COG2116">
    <property type="taxonomic scope" value="Bacteria"/>
</dbReference>
<dbReference type="HOGENOM" id="CLU_036896_3_0_6"/>
<dbReference type="InParanoid" id="P0AC23"/>
<dbReference type="OMA" id="MIWFPIM"/>
<dbReference type="OrthoDB" id="9786493at2"/>
<dbReference type="PhylomeDB" id="P0AC23"/>
<dbReference type="BioCyc" id="EcoCyc:FOCA-MONOMER"/>
<dbReference type="BioCyc" id="MetaCyc:FOCA-MONOMER"/>
<dbReference type="PRO" id="PR:P0AC23"/>
<dbReference type="Proteomes" id="UP000000625">
    <property type="component" value="Chromosome"/>
</dbReference>
<dbReference type="GO" id="GO:0005886">
    <property type="term" value="C:plasma membrane"/>
    <property type="evidence" value="ECO:0000314"/>
    <property type="project" value="EcoCyc"/>
</dbReference>
<dbReference type="GO" id="GO:0015499">
    <property type="term" value="F:formate transmembrane transporter activity"/>
    <property type="evidence" value="ECO:0000315"/>
    <property type="project" value="EcoCyc"/>
</dbReference>
<dbReference type="GO" id="GO:0042802">
    <property type="term" value="F:identical protein binding"/>
    <property type="evidence" value="ECO:0000314"/>
    <property type="project" value="EcoCyc"/>
</dbReference>
<dbReference type="GO" id="GO:0015724">
    <property type="term" value="P:formate transport"/>
    <property type="evidence" value="ECO:0000315"/>
    <property type="project" value="EcoCyc"/>
</dbReference>
<dbReference type="GO" id="GO:0019664">
    <property type="term" value="P:mixed acid fermentation"/>
    <property type="evidence" value="ECO:0000315"/>
    <property type="project" value="EcoCyc"/>
</dbReference>
<dbReference type="GO" id="GO:0010447">
    <property type="term" value="P:response to acidic pH"/>
    <property type="evidence" value="ECO:0000304"/>
    <property type="project" value="EcoCyc"/>
</dbReference>
<dbReference type="FunFam" id="1.20.1080.10:FF:000006">
    <property type="entry name" value="Formate transporter FocA"/>
    <property type="match status" value="1"/>
</dbReference>
<dbReference type="Gene3D" id="1.20.1080.10">
    <property type="entry name" value="Glycerol uptake facilitator protein"/>
    <property type="match status" value="1"/>
</dbReference>
<dbReference type="InterPro" id="IPR023271">
    <property type="entry name" value="Aquaporin-like"/>
</dbReference>
<dbReference type="InterPro" id="IPR000292">
    <property type="entry name" value="For/NO2_transpt"/>
</dbReference>
<dbReference type="InterPro" id="IPR024002">
    <property type="entry name" value="For/NO2_transpt_CS"/>
</dbReference>
<dbReference type="InterPro" id="IPR023999">
    <property type="entry name" value="Formate_transptr_FocA"/>
</dbReference>
<dbReference type="NCBIfam" id="TIGR00790">
    <property type="entry name" value="fnt"/>
    <property type="match status" value="1"/>
</dbReference>
<dbReference type="NCBIfam" id="TIGR04060">
    <property type="entry name" value="formate_focA"/>
    <property type="match status" value="1"/>
</dbReference>
<dbReference type="NCBIfam" id="NF008069">
    <property type="entry name" value="PRK10805.1"/>
    <property type="match status" value="1"/>
</dbReference>
<dbReference type="PANTHER" id="PTHR30520:SF10">
    <property type="entry name" value="FORMATE CHANNEL FOCA-RELATED"/>
    <property type="match status" value="1"/>
</dbReference>
<dbReference type="PANTHER" id="PTHR30520">
    <property type="entry name" value="FORMATE TRANSPORTER-RELATED"/>
    <property type="match status" value="1"/>
</dbReference>
<dbReference type="Pfam" id="PF01226">
    <property type="entry name" value="Form_Nir_trans"/>
    <property type="match status" value="1"/>
</dbReference>
<dbReference type="PROSITE" id="PS01005">
    <property type="entry name" value="FORMATE_NITRITE_TP_1"/>
    <property type="match status" value="1"/>
</dbReference>
<dbReference type="PROSITE" id="PS01006">
    <property type="entry name" value="FORMATE_NITRITE_TP_2"/>
    <property type="match status" value="1"/>
</dbReference>
<keyword id="KW-0997">Cell inner membrane</keyword>
<keyword id="KW-1003">Cell membrane</keyword>
<keyword id="KW-0472">Membrane</keyword>
<keyword id="KW-1185">Reference proteome</keyword>
<keyword id="KW-0812">Transmembrane</keyword>
<keyword id="KW-1133">Transmembrane helix</keyword>
<keyword id="KW-0813">Transport</keyword>
<comment type="function">
    <text evidence="5 6 9 10 11 12 13 14">Involved in the bidirectional transport of formate during mixed-acid fermentation (PubMed:23335413, PubMed:24659605, PubMed:30247527, PubMed:33169422, PubMed:35084298, PubMed:35377837, PubMed:35390794, PubMed:8022272). Functions to maintain relatively constant intracellular formate levels during growth, using different mechanisms for efflux and uptake of the anion (PubMed:35377837). Has a strong preference for formate as a substrate in vivo and not other acidic fermentation products (PubMed:23335413).</text>
</comment>
<comment type="catalytic activity">
    <reaction evidence="6 9 11 18 20">
        <text>formate(in) = formate(out)</text>
        <dbReference type="Rhea" id="RHEA:29679"/>
        <dbReference type="ChEBI" id="CHEBI:15740"/>
    </reaction>
</comment>
<comment type="activity regulation">
    <text evidence="7 9 10 13">The efflux and influx of formate are mechanistically distinct processes that are controlled by the interplay between the conserved pore residues Thr-91 and His-209 (PubMed:35390794). The direction of formate translocation depends on external pH and electron donor source (PubMed:30247527). Interaction with PflB is important for optimal translocation of formate by FocA (PubMed:24887098). The N-terminal domain may also have a role in gating formate access (PubMed:33169422).</text>
</comment>
<comment type="subunit">
    <text evidence="4 6 7 8 10">Homopentamer (PubMed:20041954, PubMed:24659605, PubMed:33169422). Interacts directly with the pyruvate formate-lyase PflB (PubMed:24887098). PflB interacts with the cytoplasmically oriented face of FocA and the N-terminal helix of FocA is important for this specific interaction (PubMed:24887098). Also interacts with the ketobutyrate/pyruvate formate-lyase TdcE (PubMed:28955877).</text>
</comment>
<comment type="subcellular location">
    <subcellularLocation>
        <location evidence="2 4 6 10">Cell inner membrane</location>
        <topology evidence="1">Multi-pass membrane protein</topology>
    </subcellularLocation>
</comment>
<comment type="induction">
    <text evidence="3 5">Part of the focA-pflB operon, which is induced anaerobically (PubMed:16849787). Transcription of the operon is restricted to the exponential phase of growth (PubMed:16849787). Expression is subject to complex transcriptional and post-transcriptional control (PubMed:16849787). The tight coupling between FocA and PflB synthesis ensures adequate substrate delivery to the appropriate formate dehydrogenase (FDH) (PubMed:23335413).</text>
</comment>
<comment type="domain">
    <text evidence="10 11 12 13">The mechanism appears to be controlled by at least two key structural features of the protein (PubMed:35377837). One of these is the cytoplasmic N-terminal domain, which is crucial for bidirectional translocation of formate across the membrane, suggesting a 'gate-keeper' function controlling anion accessibility (PubMed:33169422). The other structural feature involves two highly conserved amino acid residues: Thr-91 and His-209 (PubMed:35084298, PubMed:35377837, PubMed:35390794). Thr-91 is essential for the ability of FocA to translocate formate in both directions (PubMed:35390794). The centrally located His-209 residue within the pore of FocA is essential for efficient, pH-dependent formate uptake into the cell, but is dispensable for formate efflux (PubMed:35084298, PubMed:35390794). Interplay between Thr-91 and His-209 controls formate translocation (PubMed:35390794).</text>
</comment>
<comment type="disruption phenotype">
    <text evidence="9">When both FocA and FocB are missing, an unidentified system can transport formate.</text>
</comment>
<comment type="miscellaneous">
    <text evidence="5">Overexpression results in enhanced sensitivity to the toxic formate analog hypophosphite.</text>
</comment>
<comment type="similarity">
    <text evidence="17">Belongs to the FNT transporter (TC 1.A.16) family.</text>
</comment>
<comment type="sequence caution" evidence="17">
    <conflict type="erroneous initiation">
        <sequence resource="EMBL-CDS" id="AAA20390"/>
    </conflict>
</comment>
<accession>P0AC23</accession>
<accession>P21501</accession>
<sequence>MKADNPFDLLLPAAMAKVAEEAGVYKATKHPLKTFYLAITAGVFISIAFVFYITATTGTGTMPFGMAKLVGGICFSLGLILCVVCGADLFTSTVLIVVAKASGRITWGQLAKNWLNVYFGNLVGALLFVLLMWLSGEYMTANGQWGLNVLQTADHKVHHTFIEAVCLGILANLMVCLAVWMSYSGRSLMDKAFIMVLPVAMFVASGFEHSIANMFMIPMGIVIRDFASPEFWTAVGSAPENFSHLTVMNFITDNLIPVTIGNIIGGGLLVGLTYWVIYLRENDHH</sequence>
<gene>
    <name evidence="16" type="primary">focA</name>
    <name type="synonym">ycaE</name>
    <name type="ordered locus">b0904</name>
    <name type="ordered locus">JW0887</name>
</gene>
<organism>
    <name type="scientific">Escherichia coli (strain K12)</name>
    <dbReference type="NCBI Taxonomy" id="83333"/>
    <lineage>
        <taxon>Bacteria</taxon>
        <taxon>Pseudomonadati</taxon>
        <taxon>Pseudomonadota</taxon>
        <taxon>Gammaproteobacteria</taxon>
        <taxon>Enterobacterales</taxon>
        <taxon>Enterobacteriaceae</taxon>
        <taxon>Escherichia</taxon>
    </lineage>
</organism>